<dbReference type="EMBL" id="U00096">
    <property type="protein sequence ID" value="AAC74929.1"/>
    <property type="molecule type" value="Genomic_DNA"/>
</dbReference>
<dbReference type="EMBL" id="AP009048">
    <property type="protein sequence ID" value="BAA15667.1"/>
    <property type="molecule type" value="Genomic_DNA"/>
</dbReference>
<dbReference type="EMBL" id="U38702">
    <property type="protein sequence ID" value="AAA81031.1"/>
    <property type="molecule type" value="Genomic_DNA"/>
</dbReference>
<dbReference type="EMBL" id="M21298">
    <property type="status" value="NOT_ANNOTATED_CDS"/>
    <property type="molecule type" value="Genomic_DNA"/>
</dbReference>
<dbReference type="PIR" id="C64948">
    <property type="entry name" value="C64948"/>
</dbReference>
<dbReference type="RefSeq" id="NP_416373.1">
    <property type="nucleotide sequence ID" value="NC_000913.3"/>
</dbReference>
<dbReference type="RefSeq" id="WP_000571480.1">
    <property type="nucleotide sequence ID" value="NZ_SSZK01000001.1"/>
</dbReference>
<dbReference type="SMR" id="P39832"/>
<dbReference type="BioGRID" id="4260881">
    <property type="interactions" value="11"/>
</dbReference>
<dbReference type="ComplexPortal" id="CPX-4407">
    <property type="entry name" value="Zinc ABC transporter complex"/>
</dbReference>
<dbReference type="FunCoup" id="P39832">
    <property type="interactions" value="734"/>
</dbReference>
<dbReference type="STRING" id="511145.b1859"/>
<dbReference type="TCDB" id="3.A.1.15.5">
    <property type="family name" value="the atp-binding cassette (abc) superfamily"/>
</dbReference>
<dbReference type="PaxDb" id="511145-b1859"/>
<dbReference type="EnsemblBacteria" id="AAC74929">
    <property type="protein sequence ID" value="AAC74929"/>
    <property type="gene ID" value="b1859"/>
</dbReference>
<dbReference type="GeneID" id="946372"/>
<dbReference type="KEGG" id="ecj:JW1848"/>
<dbReference type="KEGG" id="eco:b1859"/>
<dbReference type="KEGG" id="ecoc:C3026_10590"/>
<dbReference type="PATRIC" id="fig|1411691.4.peg.389"/>
<dbReference type="EchoBASE" id="EB2271"/>
<dbReference type="eggNOG" id="COG1108">
    <property type="taxonomic scope" value="Bacteria"/>
</dbReference>
<dbReference type="HOGENOM" id="CLU_028808_3_2_6"/>
<dbReference type="InParanoid" id="P39832"/>
<dbReference type="OMA" id="WLESNTQ"/>
<dbReference type="OrthoDB" id="9783937at2"/>
<dbReference type="PhylomeDB" id="P39832"/>
<dbReference type="BioCyc" id="EcoCyc:ZNUB-MONOMER"/>
<dbReference type="BioCyc" id="MetaCyc:ZNUB-MONOMER"/>
<dbReference type="PHI-base" id="PHI:11006"/>
<dbReference type="PRO" id="PR:P39832"/>
<dbReference type="Proteomes" id="UP000000625">
    <property type="component" value="Chromosome"/>
</dbReference>
<dbReference type="GO" id="GO:0055052">
    <property type="term" value="C:ATP-binding cassette (ABC) transporter complex, substrate-binding subunit-containing"/>
    <property type="evidence" value="ECO:0000303"/>
    <property type="project" value="ComplexPortal"/>
</dbReference>
<dbReference type="GO" id="GO:0016020">
    <property type="term" value="C:membrane"/>
    <property type="evidence" value="ECO:0000303"/>
    <property type="project" value="ComplexPortal"/>
</dbReference>
<dbReference type="GO" id="GO:0005886">
    <property type="term" value="C:plasma membrane"/>
    <property type="evidence" value="ECO:0000314"/>
    <property type="project" value="EcoCyc"/>
</dbReference>
<dbReference type="GO" id="GO:0000006">
    <property type="term" value="F:high-affinity zinc transmembrane transporter activity"/>
    <property type="evidence" value="ECO:0000314"/>
    <property type="project" value="EcoCyc"/>
</dbReference>
<dbReference type="GO" id="GO:0010043">
    <property type="term" value="P:response to zinc ion"/>
    <property type="evidence" value="ECO:0000318"/>
    <property type="project" value="GO_Central"/>
</dbReference>
<dbReference type="GO" id="GO:0071578">
    <property type="term" value="P:zinc ion import across plasma membrane"/>
    <property type="evidence" value="ECO:0000314"/>
    <property type="project" value="EcoCyc"/>
</dbReference>
<dbReference type="CDD" id="cd06550">
    <property type="entry name" value="TM_ABC_iron-siderophores_like"/>
    <property type="match status" value="1"/>
</dbReference>
<dbReference type="FunFam" id="1.10.3470.10:FF:000002">
    <property type="entry name" value="Zinc ABC transporter permease subunit ZnuB"/>
    <property type="match status" value="1"/>
</dbReference>
<dbReference type="Gene3D" id="1.10.3470.10">
    <property type="entry name" value="ABC transporter involved in vitamin B12 uptake, BtuC"/>
    <property type="match status" value="1"/>
</dbReference>
<dbReference type="InterPro" id="IPR037294">
    <property type="entry name" value="ABC_BtuC-like"/>
</dbReference>
<dbReference type="InterPro" id="IPR001626">
    <property type="entry name" value="ABC_TroCD"/>
</dbReference>
<dbReference type="NCBIfam" id="NF007089">
    <property type="entry name" value="PRK09543.1"/>
    <property type="match status" value="1"/>
</dbReference>
<dbReference type="PANTHER" id="PTHR30477">
    <property type="entry name" value="ABC-TRANSPORTER METAL-BINDING PROTEIN"/>
    <property type="match status" value="1"/>
</dbReference>
<dbReference type="PANTHER" id="PTHR30477:SF23">
    <property type="entry name" value="HIGH-AFFINITY ZINC UPTAKE SYSTEM MEMBRANE PROTEIN ZNUB"/>
    <property type="match status" value="1"/>
</dbReference>
<dbReference type="Pfam" id="PF00950">
    <property type="entry name" value="ABC-3"/>
    <property type="match status" value="1"/>
</dbReference>
<dbReference type="SUPFAM" id="SSF81345">
    <property type="entry name" value="ABC transporter involved in vitamin B12 uptake, BtuC"/>
    <property type="match status" value="1"/>
</dbReference>
<organism>
    <name type="scientific">Escherichia coli (strain K12)</name>
    <dbReference type="NCBI Taxonomy" id="83333"/>
    <lineage>
        <taxon>Bacteria</taxon>
        <taxon>Pseudomonadati</taxon>
        <taxon>Pseudomonadota</taxon>
        <taxon>Gammaproteobacteria</taxon>
        <taxon>Enterobacterales</taxon>
        <taxon>Enterobacteriaceae</taxon>
        <taxon>Escherichia</taxon>
    </lineage>
</organism>
<name>ZNUB_ECOLI</name>
<reference key="1">
    <citation type="journal article" date="1996" name="DNA Res.">
        <title>A 460-kb DNA sequence of the Escherichia coli K-12 genome corresponding to the 40.1-50.0 min region on the linkage map.</title>
        <authorList>
            <person name="Itoh T."/>
            <person name="Aiba H."/>
            <person name="Baba T."/>
            <person name="Fujita K."/>
            <person name="Hayashi K."/>
            <person name="Inada T."/>
            <person name="Isono K."/>
            <person name="Kasai H."/>
            <person name="Kimura S."/>
            <person name="Kitakawa M."/>
            <person name="Kitagawa M."/>
            <person name="Makino K."/>
            <person name="Miki T."/>
            <person name="Mizobuchi K."/>
            <person name="Mori H."/>
            <person name="Mori T."/>
            <person name="Motomura K."/>
            <person name="Nakade S."/>
            <person name="Nakamura Y."/>
            <person name="Nashimoto H."/>
            <person name="Nishio Y."/>
            <person name="Oshima T."/>
            <person name="Saito N."/>
            <person name="Sampei G."/>
            <person name="Seki Y."/>
            <person name="Sivasundaram S."/>
            <person name="Tagami H."/>
            <person name="Takeda J."/>
            <person name="Takemoto K."/>
            <person name="Wada C."/>
            <person name="Yamamoto Y."/>
            <person name="Horiuchi T."/>
        </authorList>
    </citation>
    <scope>NUCLEOTIDE SEQUENCE [LARGE SCALE GENOMIC DNA]</scope>
    <source>
        <strain>K12 / W3110 / ATCC 27325 / DSM 5911</strain>
    </source>
</reference>
<reference key="2">
    <citation type="journal article" date="1997" name="Science">
        <title>The complete genome sequence of Escherichia coli K-12.</title>
        <authorList>
            <person name="Blattner F.R."/>
            <person name="Plunkett G. III"/>
            <person name="Bloch C.A."/>
            <person name="Perna N.T."/>
            <person name="Burland V."/>
            <person name="Riley M."/>
            <person name="Collado-Vides J."/>
            <person name="Glasner J.D."/>
            <person name="Rode C.K."/>
            <person name="Mayhew G.F."/>
            <person name="Gregor J."/>
            <person name="Davis N.W."/>
            <person name="Kirkpatrick H.A."/>
            <person name="Goeden M.A."/>
            <person name="Rose D.J."/>
            <person name="Mau B."/>
            <person name="Shao Y."/>
        </authorList>
    </citation>
    <scope>NUCLEOTIDE SEQUENCE [LARGE SCALE GENOMIC DNA]</scope>
    <source>
        <strain>K12 / MG1655 / ATCC 47076</strain>
    </source>
</reference>
<reference key="3">
    <citation type="journal article" date="2006" name="Mol. Syst. Biol.">
        <title>Highly accurate genome sequences of Escherichia coli K-12 strains MG1655 and W3110.</title>
        <authorList>
            <person name="Hayashi K."/>
            <person name="Morooka N."/>
            <person name="Yamamoto Y."/>
            <person name="Fujita K."/>
            <person name="Isono K."/>
            <person name="Choi S."/>
            <person name="Ohtsubo E."/>
            <person name="Baba T."/>
            <person name="Wanner B.L."/>
            <person name="Mori H."/>
            <person name="Horiuchi T."/>
        </authorList>
    </citation>
    <scope>NUCLEOTIDE SEQUENCE [LARGE SCALE GENOMIC DNA]</scope>
    <source>
        <strain>K12 / W3110 / ATCC 27325 / DSM 5911</strain>
    </source>
</reference>
<reference key="4">
    <citation type="submission" date="1995-10" db="EMBL/GenBank/DDBJ databases">
        <authorList>
            <person name="Robison K."/>
            <person name="O'Keeffe T."/>
            <person name="Church G.M."/>
        </authorList>
    </citation>
    <scope>NUCLEOTIDE SEQUENCE [GENOMIC DNA] OF 1-92</scope>
    <source>
        <strain>K12 / EMG2</strain>
    </source>
</reference>
<reference key="5">
    <citation type="journal article" date="1988" name="J. Bacteriol.">
        <title>Structure and regulation of the Escherichia coli ruv operon involved in DNA repair and recombination.</title>
        <authorList>
            <person name="Shinagawa H."/>
            <person name="Makino K."/>
            <person name="Amemura M."/>
            <person name="Kimura S."/>
            <person name="Iwasaki H."/>
            <person name="Nakata A."/>
        </authorList>
    </citation>
    <scope>NUCLEOTIDE SEQUENCE [GENOMIC DNA] OF 80-261</scope>
</reference>
<reference key="6">
    <citation type="journal article" date="1994" name="Nucleic Acids Res.">
        <title>Intrinsic and extrinsic approaches for detecting genes in a bacterial genome.</title>
        <authorList>
            <person name="Borodovsky M."/>
            <person name="Rudd K.E."/>
            <person name="Koonin E.V."/>
        </authorList>
    </citation>
    <scope>IDENTIFICATION</scope>
</reference>
<reference key="7">
    <citation type="journal article" date="1998" name="Mol. Microbiol.">
        <title>The ZnuABC high-affinity zinc uptake system and its regulator Zur in Escherichia coli.</title>
        <authorList>
            <person name="Patzer S.I."/>
            <person name="Hantke K."/>
        </authorList>
    </citation>
    <scope>CHARACTERIZATION</scope>
</reference>
<reference key="8">
    <citation type="journal article" date="2005" name="Science">
        <title>Global topology analysis of the Escherichia coli inner membrane proteome.</title>
        <authorList>
            <person name="Daley D.O."/>
            <person name="Rapp M."/>
            <person name="Granseth E."/>
            <person name="Melen K."/>
            <person name="Drew D."/>
            <person name="von Heijne G."/>
        </authorList>
    </citation>
    <scope>TOPOLOGY [LARGE SCALE ANALYSIS]</scope>
    <source>
        <strain>K12 / MG1655 / ATCC 47076</strain>
    </source>
</reference>
<proteinExistence type="evidence at protein level"/>
<sequence>MIELLFPGWLAGIMLACAAGPLGSFVVWRRMSYFGDTLAHASLLGVAFGLLLDVNPFYAVIAVTLLLAGGLVWLEKRPQLAIDTLLGIMAHSALSLGLVVVSLMSNIRVDLMAYLFGDLLAVTPEDLISIAIGVVIVVAILFWQWRNLLSMTISPDLAFVDGVKLQRVKLLLMLVTALTIGVAMKFVGALIITSLLIIPAATARRFARTPEQMAGVAVLVGMVAVTGGLTFSAVYDTPAGPSVVLCAALLFILSMMKKQAS</sequence>
<keyword id="KW-0997">Cell inner membrane</keyword>
<keyword id="KW-1003">Cell membrane</keyword>
<keyword id="KW-0406">Ion transport</keyword>
<keyword id="KW-0472">Membrane</keyword>
<keyword id="KW-1185">Reference proteome</keyword>
<keyword id="KW-0812">Transmembrane</keyword>
<keyword id="KW-1133">Transmembrane helix</keyword>
<keyword id="KW-0813">Transport</keyword>
<keyword id="KW-0862">Zinc</keyword>
<keyword id="KW-0864">Zinc transport</keyword>
<accession>P39832</accession>
<accession>P76286</accession>
<comment type="function">
    <text>Involved in the high-affinity zinc uptake transport system.</text>
</comment>
<comment type="subcellular location">
    <subcellularLocation>
        <location>Cell inner membrane</location>
        <topology>Multi-pass membrane protein</topology>
    </subcellularLocation>
</comment>
<comment type="similarity">
    <text evidence="2">Belongs to the ABC-3 integral membrane protein family.</text>
</comment>
<protein>
    <recommendedName>
        <fullName>High-affinity zinc uptake system membrane protein ZnuB</fullName>
    </recommendedName>
</protein>
<evidence type="ECO:0000255" key="1"/>
<evidence type="ECO:0000305" key="2"/>
<gene>
    <name type="primary">znuB</name>
    <name type="synonym">yebI</name>
    <name type="ordered locus">b1859</name>
    <name type="ordered locus">JW1848</name>
</gene>
<feature type="chain" id="PRO_0000171161" description="High-affinity zinc uptake system membrane protein ZnuB">
    <location>
        <begin position="1"/>
        <end position="261"/>
    </location>
</feature>
<feature type="topological domain" description="Periplasmic" evidence="1">
    <location>
        <begin position="1"/>
        <end position="7"/>
    </location>
</feature>
<feature type="transmembrane region" description="Helical" evidence="1">
    <location>
        <begin position="8"/>
        <end position="28"/>
    </location>
</feature>
<feature type="topological domain" description="Cytoplasmic" evidence="1">
    <location>
        <begin position="29"/>
        <end position="53"/>
    </location>
</feature>
<feature type="transmembrane region" description="Helical" evidence="1">
    <location>
        <begin position="54"/>
        <end position="74"/>
    </location>
</feature>
<feature type="topological domain" description="Periplasmic" evidence="1">
    <location>
        <begin position="75"/>
        <end position="83"/>
    </location>
</feature>
<feature type="transmembrane region" description="Helical" evidence="1">
    <location>
        <begin position="84"/>
        <end position="104"/>
    </location>
</feature>
<feature type="topological domain" description="Cytoplasmic" evidence="1">
    <location>
        <begin position="105"/>
        <end position="121"/>
    </location>
</feature>
<feature type="transmembrane region" description="Helical" evidence="1">
    <location>
        <begin position="122"/>
        <end position="142"/>
    </location>
</feature>
<feature type="topological domain" description="Periplasmic" evidence="1">
    <location>
        <begin position="143"/>
        <end position="177"/>
    </location>
</feature>
<feature type="transmembrane region" description="Helical" evidence="1">
    <location>
        <begin position="178"/>
        <end position="198"/>
    </location>
</feature>
<feature type="topological domain" description="Cytoplasmic" evidence="1">
    <location>
        <begin position="199"/>
        <end position="213"/>
    </location>
</feature>
<feature type="transmembrane region" description="Helical" evidence="1">
    <location>
        <begin position="214"/>
        <end position="234"/>
    </location>
</feature>
<feature type="topological domain" description="Periplasmic" evidence="1">
    <location>
        <position position="235"/>
    </location>
</feature>
<feature type="transmembrane region" description="Helical" evidence="1">
    <location>
        <begin position="236"/>
        <end position="256"/>
    </location>
</feature>
<feature type="topological domain" description="Cytoplasmic" evidence="1">
    <location>
        <begin position="257"/>
        <end position="261"/>
    </location>
</feature>